<organism>
    <name type="scientific">Pseudomonas putida (strain ATCC 47054 / DSM 6125 / CFBP 8728 / NCIMB 11950 / KT2440)</name>
    <dbReference type="NCBI Taxonomy" id="160488"/>
    <lineage>
        <taxon>Bacteria</taxon>
        <taxon>Pseudomonadati</taxon>
        <taxon>Pseudomonadota</taxon>
        <taxon>Gammaproteobacteria</taxon>
        <taxon>Pseudomonadales</taxon>
        <taxon>Pseudomonadaceae</taxon>
        <taxon>Pseudomonas</taxon>
    </lineage>
</organism>
<keyword id="KW-1185">Reference proteome</keyword>
<protein>
    <recommendedName>
        <fullName evidence="1">Protein ApaG</fullName>
    </recommendedName>
</protein>
<gene>
    <name evidence="1" type="primary">apaG</name>
    <name type="ordered locus">PP_0400</name>
</gene>
<proteinExistence type="inferred from homology"/>
<evidence type="ECO:0000255" key="1">
    <source>
        <dbReference type="HAMAP-Rule" id="MF_00791"/>
    </source>
</evidence>
<dbReference type="EMBL" id="AE015451">
    <property type="protein sequence ID" value="AAN66031.1"/>
    <property type="molecule type" value="Genomic_DNA"/>
</dbReference>
<dbReference type="RefSeq" id="NP_742567.1">
    <property type="nucleotide sequence ID" value="NC_002947.4"/>
</dbReference>
<dbReference type="RefSeq" id="WP_003255559.1">
    <property type="nucleotide sequence ID" value="NZ_CP169744.1"/>
</dbReference>
<dbReference type="SMR" id="Q88QT7"/>
<dbReference type="STRING" id="160488.PP_0400"/>
<dbReference type="PaxDb" id="160488-PP_0400"/>
<dbReference type="GeneID" id="83677691"/>
<dbReference type="KEGG" id="ppu:PP_0400"/>
<dbReference type="PATRIC" id="fig|160488.4.peg.430"/>
<dbReference type="eggNOG" id="COG2967">
    <property type="taxonomic scope" value="Bacteria"/>
</dbReference>
<dbReference type="HOGENOM" id="CLU_128074_0_0_6"/>
<dbReference type="OrthoDB" id="9795226at2"/>
<dbReference type="PhylomeDB" id="Q88QT7"/>
<dbReference type="BioCyc" id="PPUT160488:G1G01-437-MONOMER"/>
<dbReference type="Proteomes" id="UP000000556">
    <property type="component" value="Chromosome"/>
</dbReference>
<dbReference type="GO" id="GO:0070987">
    <property type="term" value="P:error-free translesion synthesis"/>
    <property type="evidence" value="ECO:0007669"/>
    <property type="project" value="TreeGrafter"/>
</dbReference>
<dbReference type="Gene3D" id="2.60.40.1470">
    <property type="entry name" value="ApaG domain"/>
    <property type="match status" value="1"/>
</dbReference>
<dbReference type="HAMAP" id="MF_00791">
    <property type="entry name" value="ApaG"/>
    <property type="match status" value="1"/>
</dbReference>
<dbReference type="InterPro" id="IPR007474">
    <property type="entry name" value="ApaG_domain"/>
</dbReference>
<dbReference type="InterPro" id="IPR036767">
    <property type="entry name" value="ApaG_sf"/>
</dbReference>
<dbReference type="InterPro" id="IPR023065">
    <property type="entry name" value="Uncharacterised_ApaG"/>
</dbReference>
<dbReference type="NCBIfam" id="NF003967">
    <property type="entry name" value="PRK05461.1"/>
    <property type="match status" value="1"/>
</dbReference>
<dbReference type="PANTHER" id="PTHR14289">
    <property type="entry name" value="F-BOX ONLY PROTEIN 3"/>
    <property type="match status" value="1"/>
</dbReference>
<dbReference type="PANTHER" id="PTHR14289:SF16">
    <property type="entry name" value="POLYMERASE DELTA-INTERACTING PROTEIN 2"/>
    <property type="match status" value="1"/>
</dbReference>
<dbReference type="Pfam" id="PF04379">
    <property type="entry name" value="DUF525"/>
    <property type="match status" value="1"/>
</dbReference>
<dbReference type="SUPFAM" id="SSF110069">
    <property type="entry name" value="ApaG-like"/>
    <property type="match status" value="1"/>
</dbReference>
<dbReference type="PROSITE" id="PS51087">
    <property type="entry name" value="APAG"/>
    <property type="match status" value="1"/>
</dbReference>
<reference key="1">
    <citation type="journal article" date="2002" name="Environ. Microbiol.">
        <title>Complete genome sequence and comparative analysis of the metabolically versatile Pseudomonas putida KT2440.</title>
        <authorList>
            <person name="Nelson K.E."/>
            <person name="Weinel C."/>
            <person name="Paulsen I.T."/>
            <person name="Dodson R.J."/>
            <person name="Hilbert H."/>
            <person name="Martins dos Santos V.A.P."/>
            <person name="Fouts D.E."/>
            <person name="Gill S.R."/>
            <person name="Pop M."/>
            <person name="Holmes M."/>
            <person name="Brinkac L.M."/>
            <person name="Beanan M.J."/>
            <person name="DeBoy R.T."/>
            <person name="Daugherty S.C."/>
            <person name="Kolonay J.F."/>
            <person name="Madupu R."/>
            <person name="Nelson W.C."/>
            <person name="White O."/>
            <person name="Peterson J.D."/>
            <person name="Khouri H.M."/>
            <person name="Hance I."/>
            <person name="Chris Lee P."/>
            <person name="Holtzapple E.K."/>
            <person name="Scanlan D."/>
            <person name="Tran K."/>
            <person name="Moazzez A."/>
            <person name="Utterback T.R."/>
            <person name="Rizzo M."/>
            <person name="Lee K."/>
            <person name="Kosack D."/>
            <person name="Moestl D."/>
            <person name="Wedler H."/>
            <person name="Lauber J."/>
            <person name="Stjepandic D."/>
            <person name="Hoheisel J."/>
            <person name="Straetz M."/>
            <person name="Heim S."/>
            <person name="Kiewitz C."/>
            <person name="Eisen J.A."/>
            <person name="Timmis K.N."/>
            <person name="Duesterhoeft A."/>
            <person name="Tuemmler B."/>
            <person name="Fraser C.M."/>
        </authorList>
    </citation>
    <scope>NUCLEOTIDE SEQUENCE [LARGE SCALE GENOMIC DNA]</scope>
    <source>
        <strain>ATCC 47054 / DSM 6125 / CFBP 8728 / NCIMB 11950 / KT2440</strain>
    </source>
</reference>
<accession>Q88QT7</accession>
<feature type="chain" id="PRO_0000197954" description="Protein ApaG">
    <location>
        <begin position="1"/>
        <end position="126"/>
    </location>
</feature>
<feature type="domain" description="ApaG" evidence="1">
    <location>
        <begin position="2"/>
        <end position="126"/>
    </location>
</feature>
<name>APAG_PSEPK</name>
<sequence length="126" mass="13792">MSDPRYQIDVSVVTRYLKEQSDPENSRFAFAYTITVQNNGSLSAKLLSRHWLITNGDGEVEEVRGAGVVGQQPNIDPGQSHTYSSGAVISTRVGTMQGSYQMFAEDGKRFDAEIAPFRLAVPGALH</sequence>